<keyword id="KW-1185">Reference proteome</keyword>
<keyword id="KW-0732">Signal</keyword>
<feature type="signal peptide" evidence="1">
    <location>
        <begin position="1"/>
        <end position="28"/>
    </location>
</feature>
<feature type="chain" id="PRO_0000360594" description="SPbeta prophage-derived uncharacterized protein YomL">
    <location>
        <begin position="29"/>
        <end position="228"/>
    </location>
</feature>
<gene>
    <name type="primary">yomL</name>
    <name type="ordered locus">BSU21320</name>
</gene>
<dbReference type="EMBL" id="AF029356">
    <property type="protein sequence ID" value="AAF76250.1"/>
    <property type="molecule type" value="Genomic_DNA"/>
</dbReference>
<dbReference type="EMBL" id="AL009126">
    <property type="protein sequence ID" value="CAB14050.1"/>
    <property type="molecule type" value="Genomic_DNA"/>
</dbReference>
<dbReference type="RefSeq" id="NP_390015.1">
    <property type="nucleotide sequence ID" value="NC_000964.3"/>
</dbReference>
<dbReference type="RefSeq" id="WP_009967529.1">
    <property type="nucleotide sequence ID" value="NZ_OZ025638.1"/>
</dbReference>
<dbReference type="FunCoup" id="O31973">
    <property type="interactions" value="23"/>
</dbReference>
<dbReference type="STRING" id="224308.BSU21320"/>
<dbReference type="PaxDb" id="224308-BSU21320"/>
<dbReference type="EnsemblBacteria" id="CAB14050">
    <property type="protein sequence ID" value="CAB14050"/>
    <property type="gene ID" value="BSU_21320"/>
</dbReference>
<dbReference type="GeneID" id="939143"/>
<dbReference type="KEGG" id="bsu:BSU21320"/>
<dbReference type="PATRIC" id="fig|224308.179.peg.2327"/>
<dbReference type="InParanoid" id="O31973"/>
<dbReference type="OrthoDB" id="2909485at2"/>
<dbReference type="BioCyc" id="BSUB:BSU21320-MONOMER"/>
<dbReference type="Proteomes" id="UP000001570">
    <property type="component" value="Chromosome"/>
</dbReference>
<reference key="1">
    <citation type="journal article" date="2000" name="Mol. Microbiol.">
        <title>Study of chromosome rearrangements associated with the trpE26 mutation of Bacillus subtilis.</title>
        <authorList>
            <person name="Regamey A."/>
            <person name="Lazarevic V."/>
            <person name="Hauser P."/>
            <person name="Karamata D."/>
        </authorList>
    </citation>
    <scope>NUCLEOTIDE SEQUENCE [GENOMIC DNA]</scope>
    <source>
        <strain>168</strain>
    </source>
</reference>
<reference key="2">
    <citation type="journal article" date="1997" name="Nature">
        <title>The complete genome sequence of the Gram-positive bacterium Bacillus subtilis.</title>
        <authorList>
            <person name="Kunst F."/>
            <person name="Ogasawara N."/>
            <person name="Moszer I."/>
            <person name="Albertini A.M."/>
            <person name="Alloni G."/>
            <person name="Azevedo V."/>
            <person name="Bertero M.G."/>
            <person name="Bessieres P."/>
            <person name="Bolotin A."/>
            <person name="Borchert S."/>
            <person name="Borriss R."/>
            <person name="Boursier L."/>
            <person name="Brans A."/>
            <person name="Braun M."/>
            <person name="Brignell S.C."/>
            <person name="Bron S."/>
            <person name="Brouillet S."/>
            <person name="Bruschi C.V."/>
            <person name="Caldwell B."/>
            <person name="Capuano V."/>
            <person name="Carter N.M."/>
            <person name="Choi S.-K."/>
            <person name="Codani J.-J."/>
            <person name="Connerton I.F."/>
            <person name="Cummings N.J."/>
            <person name="Daniel R.A."/>
            <person name="Denizot F."/>
            <person name="Devine K.M."/>
            <person name="Duesterhoeft A."/>
            <person name="Ehrlich S.D."/>
            <person name="Emmerson P.T."/>
            <person name="Entian K.-D."/>
            <person name="Errington J."/>
            <person name="Fabret C."/>
            <person name="Ferrari E."/>
            <person name="Foulger D."/>
            <person name="Fritz C."/>
            <person name="Fujita M."/>
            <person name="Fujita Y."/>
            <person name="Fuma S."/>
            <person name="Galizzi A."/>
            <person name="Galleron N."/>
            <person name="Ghim S.-Y."/>
            <person name="Glaser P."/>
            <person name="Goffeau A."/>
            <person name="Golightly E.J."/>
            <person name="Grandi G."/>
            <person name="Guiseppi G."/>
            <person name="Guy B.J."/>
            <person name="Haga K."/>
            <person name="Haiech J."/>
            <person name="Harwood C.R."/>
            <person name="Henaut A."/>
            <person name="Hilbert H."/>
            <person name="Holsappel S."/>
            <person name="Hosono S."/>
            <person name="Hullo M.-F."/>
            <person name="Itaya M."/>
            <person name="Jones L.-M."/>
            <person name="Joris B."/>
            <person name="Karamata D."/>
            <person name="Kasahara Y."/>
            <person name="Klaerr-Blanchard M."/>
            <person name="Klein C."/>
            <person name="Kobayashi Y."/>
            <person name="Koetter P."/>
            <person name="Koningstein G."/>
            <person name="Krogh S."/>
            <person name="Kumano M."/>
            <person name="Kurita K."/>
            <person name="Lapidus A."/>
            <person name="Lardinois S."/>
            <person name="Lauber J."/>
            <person name="Lazarevic V."/>
            <person name="Lee S.-M."/>
            <person name="Levine A."/>
            <person name="Liu H."/>
            <person name="Masuda S."/>
            <person name="Mauel C."/>
            <person name="Medigue C."/>
            <person name="Medina N."/>
            <person name="Mellado R.P."/>
            <person name="Mizuno M."/>
            <person name="Moestl D."/>
            <person name="Nakai S."/>
            <person name="Noback M."/>
            <person name="Noone D."/>
            <person name="O'Reilly M."/>
            <person name="Ogawa K."/>
            <person name="Ogiwara A."/>
            <person name="Oudega B."/>
            <person name="Park S.-H."/>
            <person name="Parro V."/>
            <person name="Pohl T.M."/>
            <person name="Portetelle D."/>
            <person name="Porwollik S."/>
            <person name="Prescott A.M."/>
            <person name="Presecan E."/>
            <person name="Pujic P."/>
            <person name="Purnelle B."/>
            <person name="Rapoport G."/>
            <person name="Rey M."/>
            <person name="Reynolds S."/>
            <person name="Rieger M."/>
            <person name="Rivolta C."/>
            <person name="Rocha E."/>
            <person name="Roche B."/>
            <person name="Rose M."/>
            <person name="Sadaie Y."/>
            <person name="Sato T."/>
            <person name="Scanlan E."/>
            <person name="Schleich S."/>
            <person name="Schroeter R."/>
            <person name="Scoffone F."/>
            <person name="Sekiguchi J."/>
            <person name="Sekowska A."/>
            <person name="Seror S.J."/>
            <person name="Serror P."/>
            <person name="Shin B.-S."/>
            <person name="Soldo B."/>
            <person name="Sorokin A."/>
            <person name="Tacconi E."/>
            <person name="Takagi T."/>
            <person name="Takahashi H."/>
            <person name="Takemaru K."/>
            <person name="Takeuchi M."/>
            <person name="Tamakoshi A."/>
            <person name="Tanaka T."/>
            <person name="Terpstra P."/>
            <person name="Tognoni A."/>
            <person name="Tosato V."/>
            <person name="Uchiyama S."/>
            <person name="Vandenbol M."/>
            <person name="Vannier F."/>
            <person name="Vassarotti A."/>
            <person name="Viari A."/>
            <person name="Wambutt R."/>
            <person name="Wedler E."/>
            <person name="Wedler H."/>
            <person name="Weitzenegger T."/>
            <person name="Winters P."/>
            <person name="Wipat A."/>
            <person name="Yamamoto H."/>
            <person name="Yamane K."/>
            <person name="Yasumoto K."/>
            <person name="Yata K."/>
            <person name="Yoshida K."/>
            <person name="Yoshikawa H.-F."/>
            <person name="Zumstein E."/>
            <person name="Yoshikawa H."/>
            <person name="Danchin A."/>
        </authorList>
    </citation>
    <scope>NUCLEOTIDE SEQUENCE [LARGE SCALE GENOMIC DNA]</scope>
    <source>
        <strain>168</strain>
    </source>
</reference>
<protein>
    <recommendedName>
        <fullName>SPbeta prophage-derived uncharacterized protein YomL</fullName>
    </recommendedName>
</protein>
<name>YOML_BACSU</name>
<sequence length="228" mass="25433">MRKKRVITCVMAASLTLGSLLPAGYATAKEDSKTTPSYEELALHYKMKSEKISSNGKLVEIEYVSGNETHKVQMNGNDHTVKVDGIEQKGLNFEYDENAANRTNYENNNLKSNEFTTQAAKPKKGYHYVGTLSGHTKAAKNALSVTMSLVGIVPGLGWGSKAATILFSYWAKEQIPDAYYKYDLYEKGAMTDSWYQYATVQFFEDKAHKKKMGKPWTSTPAKVDLPNS</sequence>
<proteinExistence type="inferred from homology"/>
<accession>O31973</accession>
<accession>Q7BV46</accession>
<organism>
    <name type="scientific">Bacillus subtilis (strain 168)</name>
    <dbReference type="NCBI Taxonomy" id="224308"/>
    <lineage>
        <taxon>Bacteria</taxon>
        <taxon>Bacillati</taxon>
        <taxon>Bacillota</taxon>
        <taxon>Bacilli</taxon>
        <taxon>Bacillales</taxon>
        <taxon>Bacillaceae</taxon>
        <taxon>Bacillus</taxon>
    </lineage>
</organism>
<evidence type="ECO:0000255" key="1"/>